<accession>A8BE61</accession>
<sequence length="569" mass="63322">MNRLATGTAMHPAMTARTVTRGSVQQAVGGTAAMTQVALTARPITNMGMPGTRAVGGQRQVLDLGYYTSELRNLITATNKEAEALSKQTIELQKREGQLQRQQESLHAIQREVDELQGELQDILYSQSRLSENATLEDLRAEATEAESAASKTRNEANIAYKARVDAEERLRKNEASAVHLRTEMEAQIESTLGLQAAERYRSLNDENITLKQKESELRKELQEAAAVAANAYSFCTILSNYTSGGSISGQPGHIAMDERISGVDTNIQKAITLHRQIRAAKRELDAYKAKIKAAESHDPEQSLKQQLRNRFRVEQMETQSLVEEIKITESGVQQRKKLLEEITPDATVTITKEQKDLLKSVIKAEAFLVEFPNKKLALQTSIKQAQAEVVNLISRLPIPQGTVSVPGEENPGAIEAQLQQKSRELDRTTDTEMRVNAELRTYGDKVSALTDSLERLRADLRDAESIENVEAEESTLKTKLTSLKAMHEEETKTLEKSKGALRLIEDQIAANENAQLLRNLLDQLSANLQKKYAVELFIVQKTIESCYDEPKKKCLQLVSEINNILMGG</sequence>
<feature type="chain" id="PRO_0000459309" description="Intraflagellar transport protein 74/72">
    <location>
        <begin position="1"/>
        <end position="569"/>
    </location>
</feature>
<feature type="coiled-coil region" evidence="1">
    <location>
        <begin position="75"/>
        <end position="156"/>
    </location>
</feature>
<feature type="coiled-coil region" evidence="1">
    <location>
        <begin position="201"/>
        <end position="231"/>
    </location>
</feature>
<feature type="coiled-coil region" evidence="1">
    <location>
        <begin position="271"/>
        <end position="298"/>
    </location>
</feature>
<dbReference type="EMBL" id="AACB02000013">
    <property type="protein sequence ID" value="EDO79922.1"/>
    <property type="molecule type" value="Genomic_DNA"/>
</dbReference>
<dbReference type="EMBL" id="AACB03000001">
    <property type="protein sequence ID" value="KAE8305832.1"/>
    <property type="molecule type" value="Genomic_DNA"/>
</dbReference>
<dbReference type="RefSeq" id="XP_001707596.1">
    <property type="nucleotide sequence ID" value="XM_001707544.1"/>
</dbReference>
<dbReference type="SMR" id="A8BE61"/>
<dbReference type="STRING" id="184922.A8BE61"/>
<dbReference type="EnsemblProtists" id="EDO79922">
    <property type="protein sequence ID" value="EDO79922"/>
    <property type="gene ID" value="GL50803_9750"/>
</dbReference>
<dbReference type="GeneID" id="5700498"/>
<dbReference type="KEGG" id="gla:GL50803_009750"/>
<dbReference type="VEuPathDB" id="GiardiaDB:GL50803_9750"/>
<dbReference type="HOGENOM" id="CLU_479364_0_0_1"/>
<dbReference type="OMA" id="YPQNLEN"/>
<dbReference type="Proteomes" id="UP000001548">
    <property type="component" value="Chromosome 5"/>
</dbReference>
<dbReference type="GO" id="GO:0097729">
    <property type="term" value="C:9+2 motile cilium"/>
    <property type="evidence" value="ECO:0000314"/>
    <property type="project" value="UniProtKB"/>
</dbReference>
<dbReference type="GO" id="GO:0005930">
    <property type="term" value="C:axoneme"/>
    <property type="evidence" value="ECO:0000314"/>
    <property type="project" value="UniProtKB"/>
</dbReference>
<dbReference type="GO" id="GO:0036064">
    <property type="term" value="C:ciliary basal body"/>
    <property type="evidence" value="ECO:0000314"/>
    <property type="project" value="UniProtKB"/>
</dbReference>
<dbReference type="GO" id="GO:1990900">
    <property type="term" value="C:ciliary pocket collar"/>
    <property type="evidence" value="ECO:0000314"/>
    <property type="project" value="UniProtKB"/>
</dbReference>
<dbReference type="GO" id="GO:0097542">
    <property type="term" value="C:ciliary tip"/>
    <property type="evidence" value="ECO:0000314"/>
    <property type="project" value="UniProtKB"/>
</dbReference>
<dbReference type="GO" id="GO:0005929">
    <property type="term" value="C:cilium"/>
    <property type="evidence" value="ECO:0000318"/>
    <property type="project" value="GO_Central"/>
</dbReference>
<dbReference type="GO" id="GO:0030992">
    <property type="term" value="C:intraciliary transport particle B"/>
    <property type="evidence" value="ECO:0000318"/>
    <property type="project" value="GO_Central"/>
</dbReference>
<dbReference type="GO" id="GO:0048487">
    <property type="term" value="F:beta-tubulin binding"/>
    <property type="evidence" value="ECO:0000318"/>
    <property type="project" value="GO_Central"/>
</dbReference>
<dbReference type="GO" id="GO:0060271">
    <property type="term" value="P:cilium assembly"/>
    <property type="evidence" value="ECO:0000305"/>
    <property type="project" value="UniProtKB"/>
</dbReference>
<dbReference type="GO" id="GO:0035735">
    <property type="term" value="P:intraciliary transport involved in cilium assembly"/>
    <property type="evidence" value="ECO:0000318"/>
    <property type="project" value="GO_Central"/>
</dbReference>
<dbReference type="InterPro" id="IPR029602">
    <property type="entry name" value="IFT74"/>
</dbReference>
<dbReference type="PANTHER" id="PTHR31432">
    <property type="entry name" value="INTRAFLAGELLAR TRANSPORT PROTEIN 74 HOMOLOG"/>
    <property type="match status" value="1"/>
</dbReference>
<dbReference type="PANTHER" id="PTHR31432:SF0">
    <property type="entry name" value="INTRAFLAGELLAR TRANSPORT PROTEIN 74 HOMOLOG"/>
    <property type="match status" value="1"/>
</dbReference>
<gene>
    <name evidence="7" type="ORF">GL50803_009750</name>
    <name evidence="6" type="ORF">GL50803_9750</name>
</gene>
<keyword id="KW-0966">Cell projection</keyword>
<keyword id="KW-0969">Cilium</keyword>
<keyword id="KW-0970">Cilium biogenesis/degradation</keyword>
<keyword id="KW-0175">Coiled coil</keyword>
<keyword id="KW-0963">Cytoplasm</keyword>
<keyword id="KW-0206">Cytoskeleton</keyword>
<keyword id="KW-0282">Flagellum</keyword>
<keyword id="KW-1185">Reference proteome</keyword>
<organism evidence="6">
    <name type="scientific">Giardia intestinalis (strain ATCC 50803 / WB clone C6)</name>
    <name type="common">Giardia lamblia</name>
    <dbReference type="NCBI Taxonomy" id="184922"/>
    <lineage>
        <taxon>Eukaryota</taxon>
        <taxon>Metamonada</taxon>
        <taxon>Diplomonadida</taxon>
        <taxon>Hexamitidae</taxon>
        <taxon>Giardiinae</taxon>
        <taxon>Giardia</taxon>
    </lineage>
</organism>
<name>IFT74_GIAIC</name>
<reference evidence="6 8" key="1">
    <citation type="journal article" date="2007" name="Science">
        <title>Genomic minimalism in the early diverging intestinal parasite Giardia lamblia.</title>
        <authorList>
            <person name="Morrison H.G."/>
            <person name="McArthur A.G."/>
            <person name="Gillin F.D."/>
            <person name="Aley S.B."/>
            <person name="Adam R.D."/>
            <person name="Olsen G.J."/>
            <person name="Best A.A."/>
            <person name="Cande W.Z."/>
            <person name="Chen F."/>
            <person name="Cipriano M.J."/>
            <person name="Davids B.J."/>
            <person name="Dawson S.C."/>
            <person name="Elmendorf H.G."/>
            <person name="Hehl A.B."/>
            <person name="Holder M.E."/>
            <person name="Huse S.M."/>
            <person name="Kim U.U."/>
            <person name="Lasek-Nesselquist E."/>
            <person name="Manning G."/>
            <person name="Nigam A."/>
            <person name="Nixon J.E.J."/>
            <person name="Palm D."/>
            <person name="Passamaneck N.E."/>
            <person name="Prabhu A."/>
            <person name="Reich C.I."/>
            <person name="Reiner D.S."/>
            <person name="Samuelson J."/>
            <person name="Svard S.G."/>
            <person name="Sogin M.L."/>
        </authorList>
    </citation>
    <scope>NUCLEOTIDE SEQUENCE [LARGE SCALE GENOMIC DNA]</scope>
    <source>
        <strain evidence="8">ATCC 50803 / WB clone C6</strain>
    </source>
</reference>
<reference evidence="7" key="2">
    <citation type="submission" date="2019-07" db="EMBL/GenBank/DDBJ databases">
        <title>New Giardia intestinalis WB genome in near-complete chromosomes.</title>
        <authorList>
            <person name="Xu F."/>
            <person name="Jex A."/>
            <person name="Svard S.G."/>
        </authorList>
    </citation>
    <scope>NUCLEOTIDE SEQUENCE [LARGE SCALE GENOMIC DNA]</scope>
    <source>
        <strain evidence="7">ATCC 50803 / WB clone C6</strain>
    </source>
</reference>
<reference key="3">
    <citation type="journal article" date="2019" name="Elife">
        <title>Length-dependent disassembly maintains four different flagellar lengths in Giardia.</title>
        <authorList>
            <person name="McInally S.G."/>
            <person name="Kondev J."/>
            <person name="Dawson S.C."/>
        </authorList>
    </citation>
    <scope>FUNCTION</scope>
    <scope>SUBCELLULAR LOCATION</scope>
    <source>
        <strain evidence="3">ATCC 50803 / WB clone C6</strain>
    </source>
</reference>
<evidence type="ECO:0000255" key="1"/>
<evidence type="ECO:0000269" key="2">
    <source>
    </source>
</evidence>
<evidence type="ECO:0000303" key="3">
    <source>
    </source>
</evidence>
<evidence type="ECO:0000305" key="4"/>
<evidence type="ECO:0000305" key="5">
    <source>
    </source>
</evidence>
<evidence type="ECO:0000312" key="6">
    <source>
        <dbReference type="EMBL" id="EDO79922.1"/>
    </source>
</evidence>
<evidence type="ECO:0000312" key="7">
    <source>
        <dbReference type="EMBL" id="KAE8305832.1"/>
    </source>
</evidence>
<evidence type="ECO:0000312" key="8">
    <source>
        <dbReference type="Proteomes" id="UP000001548"/>
    </source>
</evidence>
<comment type="function">
    <text evidence="5">Component of the intraflagellar transport complex B (IFT-B) involved in flagellar assembly (Probable).</text>
</comment>
<comment type="subcellular location">
    <subcellularLocation>
        <location evidence="2">Cell projection</location>
        <location evidence="2">Cilium</location>
        <location evidence="2">Flagellum</location>
    </subcellularLocation>
    <subcellularLocation>
        <location evidence="2">Cytoplasm</location>
        <location evidence="2">Cytoskeleton</location>
        <location evidence="2">Flagellum axoneme</location>
    </subcellularLocation>
    <subcellularLocation>
        <location evidence="2">Cytoplasm</location>
        <location evidence="2">Cytoskeleton</location>
        <location evidence="2">Flagellum basal body</location>
    </subcellularLocation>
    <text evidence="2">Localizes to the cytoplasmic and membrane-bound portions of each of the eight axonemes, localizing particularly at the flagellar pores and at the distal flagellar tips. Localizes to the basal bodies.</text>
</comment>
<comment type="similarity">
    <text evidence="4">Belongs to the IFT74 family.</text>
</comment>
<protein>
    <recommendedName>
        <fullName evidence="3">Intraflagellar transport protein 74/72</fullName>
        <shortName evidence="3">IFT74/72</shortName>
    </recommendedName>
    <alternativeName>
        <fullName evidence="7">Intraflagellar transport protein IFT74/72</fullName>
    </alternativeName>
    <alternativeName>
        <fullName evidence="6">Intraflagellar transport protein component IFT74/72</fullName>
    </alternativeName>
</protein>
<proteinExistence type="inferred from homology"/>